<proteinExistence type="evidence at protein level"/>
<accession>P81534</accession>
<accession>Q8NFG6</accession>
<accession>Q9NPF6</accession>
<sequence>MRIHYLLFALLFLFLVPVPGHGGIINTLQKYYCRVRGGRCAVLSCLPKEEQIGKCSTRGRKCCRRKK</sequence>
<organism>
    <name type="scientific">Homo sapiens</name>
    <name type="common">Human</name>
    <dbReference type="NCBI Taxonomy" id="9606"/>
    <lineage>
        <taxon>Eukaryota</taxon>
        <taxon>Metazoa</taxon>
        <taxon>Chordata</taxon>
        <taxon>Craniata</taxon>
        <taxon>Vertebrata</taxon>
        <taxon>Euteleostomi</taxon>
        <taxon>Mammalia</taxon>
        <taxon>Eutheria</taxon>
        <taxon>Euarchontoglires</taxon>
        <taxon>Primates</taxon>
        <taxon>Haplorrhini</taxon>
        <taxon>Catarrhini</taxon>
        <taxon>Hominidae</taxon>
        <taxon>Homo</taxon>
    </lineage>
</organism>
<keyword id="KW-0002">3D-structure</keyword>
<keyword id="KW-0044">Antibiotic</keyword>
<keyword id="KW-0929">Antimicrobial</keyword>
<keyword id="KW-0211">Defensin</keyword>
<keyword id="KW-0903">Direct protein sequencing</keyword>
<keyword id="KW-1015">Disulfide bond</keyword>
<keyword id="KW-1185">Reference proteome</keyword>
<keyword id="KW-0964">Secreted</keyword>
<keyword id="KW-0732">Signal</keyword>
<comment type="function">
    <text evidence="1">Exhibits antimicrobial activity against Gram-positive bacteria S.aureus and S.pyogenes, Gram-negative bacteria P.aeruginosa and E.coli and the yeast C.albicans. Kills multiresistant S.aureus and vancomycin-resistant E.faecium. No significant hemolytic activity was observed.</text>
</comment>
<comment type="interaction">
    <interactant intactId="EBI-12074168">
        <id>P81534</id>
    </interactant>
    <interactant intactId="EBI-13059134">
        <id>Q13520</id>
        <label>AQP6</label>
    </interactant>
    <organismsDiffer>false</organismsDiffer>
    <experiments>3</experiments>
</comment>
<comment type="interaction">
    <interactant intactId="EBI-12074168">
        <id>P81534</id>
    </interactant>
    <interactant intactId="EBI-14141066">
        <id>Q9Y2C3</id>
        <label>B3GALT5</label>
    </interactant>
    <organismsDiffer>false</organismsDiffer>
    <experiments>3</experiments>
</comment>
<comment type="interaction">
    <interactant intactId="EBI-12074168">
        <id>P81534</id>
    </interactant>
    <interactant intactId="EBI-3915253">
        <id>Q15125</id>
        <label>EBP</label>
    </interactant>
    <organismsDiffer>false</organismsDiffer>
    <experiments>3</experiments>
</comment>
<comment type="interaction">
    <interactant intactId="EBI-12074168">
        <id>P81534</id>
    </interactant>
    <interactant intactId="EBI-781551">
        <id>Q9Y282</id>
        <label>ERGIC3</label>
    </interactant>
    <organismsDiffer>false</organismsDiffer>
    <experiments>3</experiments>
</comment>
<comment type="interaction">
    <interactant intactId="EBI-12074168">
        <id>P81534</id>
    </interactant>
    <interactant intactId="EBI-12382569">
        <id>Q2M2E3</id>
        <label>ODF4</label>
    </interactant>
    <organismsDiffer>false</organismsDiffer>
    <experiments>3</experiments>
</comment>
<comment type="interaction">
    <interactant intactId="EBI-12074168">
        <id>P81534</id>
    </interactant>
    <interactant intactId="EBI-17247926">
        <id>Q9NY72</id>
        <label>SCN3B</label>
    </interactant>
    <organismsDiffer>false</organismsDiffer>
    <experiments>3</experiments>
</comment>
<comment type="interaction">
    <interactant intactId="EBI-12074168">
        <id>P81534</id>
    </interactant>
    <interactant intactId="EBI-1222614">
        <id>Q8IWB4</id>
        <label>SPATA31A7</label>
    </interactant>
    <organismsDiffer>false</organismsDiffer>
    <experiments>3</experiments>
</comment>
<comment type="interaction">
    <interactant intactId="EBI-12074168">
        <id>P81534</id>
    </interactant>
    <interactant intactId="EBI-17280858">
        <id>Q8WWF3</id>
        <label>SSMEM1</label>
    </interactant>
    <organismsDiffer>false</organismsDiffer>
    <experiments>3</experiments>
</comment>
<comment type="interaction">
    <interactant intactId="EBI-12074168">
        <id>P81534</id>
    </interactant>
    <interactant intactId="EBI-8638294">
        <id>Q9NUH8</id>
        <label>TMEM14B</label>
    </interactant>
    <organismsDiffer>false</organismsDiffer>
    <experiments>3</experiments>
</comment>
<comment type="interaction">
    <interactant intactId="EBI-12074168">
        <id>P81534</id>
    </interactant>
    <interactant intactId="EBI-12345267">
        <id>O15393-2</id>
        <label>TMPRSS2</label>
    </interactant>
    <organismsDiffer>false</organismsDiffer>
    <experiments>3</experiments>
</comment>
<comment type="subcellular location">
    <subcellularLocation>
        <location>Secreted</location>
    </subcellularLocation>
</comment>
<comment type="tissue specificity">
    <text evidence="1">Highly expressed in skin and tonsils, and to a lesser extent in trachea, uterus, kidney, thymus, adenoid, pharynx and tongue. Low expression in salivary gland, bone marrow, colon, stomach, polyp and larynx. No expression in small intestine.</text>
</comment>
<comment type="induction">
    <text evidence="1">By bacterial infection and by IFNG/IFN-gamma.</text>
</comment>
<comment type="mass spectrometry"/>
<comment type="similarity">
    <text evidence="3">Belongs to the beta-defensin family.</text>
</comment>
<feature type="signal peptide" evidence="1">
    <location>
        <begin position="1"/>
        <end position="22"/>
    </location>
</feature>
<feature type="peptide" id="PRO_0000006971" description="Beta-defensin 103">
    <location>
        <begin position="23"/>
        <end position="67"/>
    </location>
</feature>
<feature type="disulfide bond" evidence="2 4">
    <location>
        <begin position="33"/>
        <end position="62"/>
    </location>
</feature>
<feature type="disulfide bond" evidence="2 4">
    <location>
        <begin position="40"/>
        <end position="55"/>
    </location>
</feature>
<feature type="disulfide bond" evidence="2 4">
    <location>
        <begin position="45"/>
        <end position="63"/>
    </location>
</feature>
<feature type="sequence conflict" description="In Ref. 6; AAM62424." evidence="3" ref="6">
    <original>C</original>
    <variation>R</variation>
    <location>
        <position position="45"/>
    </location>
</feature>
<feature type="turn" evidence="5">
    <location>
        <begin position="29"/>
        <end position="31"/>
    </location>
</feature>
<feature type="helix" evidence="5">
    <location>
        <begin position="32"/>
        <end position="36"/>
    </location>
</feature>
<feature type="strand" evidence="5">
    <location>
        <begin position="39"/>
        <end position="44"/>
    </location>
</feature>
<feature type="strand" evidence="5">
    <location>
        <begin position="49"/>
        <end position="53"/>
    </location>
</feature>
<feature type="strand" evidence="5">
    <location>
        <begin position="55"/>
        <end position="59"/>
    </location>
</feature>
<feature type="strand" evidence="5">
    <location>
        <begin position="61"/>
        <end position="65"/>
    </location>
</feature>
<evidence type="ECO:0000269" key="1">
    <source>
    </source>
</evidence>
<evidence type="ECO:0000269" key="2">
    <source>
    </source>
</evidence>
<evidence type="ECO:0000305" key="3"/>
<evidence type="ECO:0007744" key="4">
    <source>
        <dbReference type="PDB" id="1KJ6"/>
    </source>
</evidence>
<evidence type="ECO:0007829" key="5">
    <source>
        <dbReference type="PDB" id="1KJ6"/>
    </source>
</evidence>
<dbReference type="EMBL" id="AJ237673">
    <property type="protein sequence ID" value="CAC03097.1"/>
    <property type="molecule type" value="mRNA"/>
</dbReference>
<dbReference type="EMBL" id="AF295370">
    <property type="protein sequence ID" value="AAG02237.1"/>
    <property type="molecule type" value="mRNA"/>
</dbReference>
<dbReference type="EMBL" id="AF217245">
    <property type="protein sequence ID" value="AAF73853.1"/>
    <property type="molecule type" value="mRNA"/>
</dbReference>
<dbReference type="EMBL" id="AB037972">
    <property type="protein sequence ID" value="BAB40572.1"/>
    <property type="molecule type" value="mRNA"/>
</dbReference>
<dbReference type="EMBL" id="AF301470">
    <property type="protein sequence ID" value="AAG22030.1"/>
    <property type="molecule type" value="mRNA"/>
</dbReference>
<dbReference type="EMBL" id="AF516673">
    <property type="protein sequence ID" value="AAM62424.1"/>
    <property type="molecule type" value="mRNA"/>
</dbReference>
<dbReference type="CCDS" id="CCDS34810.1"/>
<dbReference type="CCDS" id="CCDS43701.1"/>
<dbReference type="RefSeq" id="NP_001075020.1">
    <property type="nucleotide sequence ID" value="NM_001081551.4"/>
</dbReference>
<dbReference type="RefSeq" id="NP_061131.1">
    <property type="nucleotide sequence ID" value="NM_018661.4"/>
</dbReference>
<dbReference type="RefSeq" id="XP_016885681.1">
    <property type="nucleotide sequence ID" value="XM_017030192.1"/>
</dbReference>
<dbReference type="PDB" id="1KJ6">
    <property type="method" value="NMR"/>
    <property type="chains" value="A=23-67"/>
</dbReference>
<dbReference type="PDBsum" id="1KJ6"/>
<dbReference type="SMR" id="P81534"/>
<dbReference type="BioGRID" id="120984">
    <property type="interactions" value="13"/>
</dbReference>
<dbReference type="BioGRID" id="136062">
    <property type="interactions" value="12"/>
</dbReference>
<dbReference type="FunCoup" id="P81534">
    <property type="interactions" value="189"/>
</dbReference>
<dbReference type="IntAct" id="P81534">
    <property type="interactions" value="10"/>
</dbReference>
<dbReference type="STRING" id="9606.ENSP00000320951"/>
<dbReference type="TCDB" id="1.C.85.1.3">
    <property type="family name" value="the pore-forming Beta-defensin (Beta-defensin) family"/>
</dbReference>
<dbReference type="BioMuta" id="DEFB103A"/>
<dbReference type="DMDM" id="17372441"/>
<dbReference type="MassIVE" id="P81534"/>
<dbReference type="PaxDb" id="9606-ENSP00000320951"/>
<dbReference type="PeptideAtlas" id="P81534"/>
<dbReference type="ProteomicsDB" id="57697"/>
<dbReference type="Antibodypedia" id="22020">
    <property type="antibodies" value="142 antibodies from 21 providers"/>
</dbReference>
<dbReference type="Antibodypedia" id="58735">
    <property type="antibodies" value="60 antibodies from 7 providers"/>
</dbReference>
<dbReference type="DNASU" id="55894"/>
<dbReference type="Ensembl" id="ENST00000314357.4">
    <property type="protein sequence ID" value="ENSP00000320951.3"/>
    <property type="gene ID" value="ENSG00000176797.4"/>
</dbReference>
<dbReference type="Ensembl" id="ENST00000318124.3">
    <property type="protein sequence ID" value="ENSP00000324633.3"/>
    <property type="gene ID" value="ENSG00000177243.3"/>
</dbReference>
<dbReference type="Ensembl" id="ENST00000613448.2">
    <property type="protein sequence ID" value="ENSP00000480773.1"/>
    <property type="gene ID" value="ENSG00000273641.2"/>
</dbReference>
<dbReference type="Ensembl" id="ENST00000642635.2">
    <property type="protein sequence ID" value="ENSP00000495040.1"/>
    <property type="gene ID" value="ENSG00000285376.2"/>
</dbReference>
<dbReference type="Ensembl" id="ENST00000646344.2">
    <property type="protein sequence ID" value="ENSP00000493616.1"/>
    <property type="gene ID" value="ENSG00000284978.2"/>
</dbReference>
<dbReference type="GeneID" id="414325"/>
<dbReference type="GeneID" id="55894"/>
<dbReference type="KEGG" id="hsa:414325"/>
<dbReference type="KEGG" id="hsa:55894"/>
<dbReference type="MANE-Select" id="ENST00000314357.4">
    <property type="protein sequence ID" value="ENSP00000320951.3"/>
    <property type="RefSeq nucleotide sequence ID" value="NM_001081551.4"/>
    <property type="RefSeq protein sequence ID" value="NP_001075020.1"/>
</dbReference>
<dbReference type="MANE-Select" id="ENST00000318124.3">
    <property type="protein sequence ID" value="ENSP00000324633.3"/>
    <property type="RefSeq nucleotide sequence ID" value="NM_018661.4"/>
    <property type="RefSeq protein sequence ID" value="NP_061131.1"/>
</dbReference>
<dbReference type="UCSC" id="uc003wrf.4">
    <property type="organism name" value="human"/>
</dbReference>
<dbReference type="AGR" id="HGNC:15967"/>
<dbReference type="AGR" id="HGNC:31702"/>
<dbReference type="CTD" id="414325"/>
<dbReference type="CTD" id="55894"/>
<dbReference type="DisGeNET" id="414325"/>
<dbReference type="DisGeNET" id="55894"/>
<dbReference type="GeneCards" id="DEFB103A"/>
<dbReference type="GeneCards" id="DEFB103B"/>
<dbReference type="HGNC" id="HGNC:15967">
    <property type="gene designation" value="DEFB103A"/>
</dbReference>
<dbReference type="HGNC" id="HGNC:31702">
    <property type="gene designation" value="DEFB103B"/>
</dbReference>
<dbReference type="HPA" id="ENSG00000176797">
    <property type="expression patterns" value="Tissue enhanced (lymphoid tissue, salivary gland, vagina)"/>
</dbReference>
<dbReference type="HPA" id="ENSG00000177243">
    <property type="expression patterns" value="Tissue enhanced (cervix)"/>
</dbReference>
<dbReference type="MIM" id="606611">
    <property type="type" value="gene"/>
</dbReference>
<dbReference type="neXtProt" id="NX_P81534"/>
<dbReference type="OpenTargets" id="ENSG00000176797"/>
<dbReference type="PharmGKB" id="PA134933952"/>
<dbReference type="VEuPathDB" id="HostDB:ENSG00000176797"/>
<dbReference type="VEuPathDB" id="HostDB:ENSG00000177243"/>
<dbReference type="eggNOG" id="ENOG502TF5P">
    <property type="taxonomic scope" value="Eukaryota"/>
</dbReference>
<dbReference type="GeneTree" id="ENSGT00530000064280"/>
<dbReference type="HOGENOM" id="CLU_189296_2_0_1"/>
<dbReference type="InParanoid" id="P81534"/>
<dbReference type="OMA" id="RETQIGH"/>
<dbReference type="OrthoDB" id="9449637at2759"/>
<dbReference type="PAN-GO" id="P81534">
    <property type="GO annotations" value="5 GO annotations based on evolutionary models"/>
</dbReference>
<dbReference type="PhylomeDB" id="P81534"/>
<dbReference type="PathwayCommons" id="P81534"/>
<dbReference type="Reactome" id="R-HSA-1461957">
    <property type="pathway name" value="Beta defensins"/>
</dbReference>
<dbReference type="Reactome" id="R-HSA-1461973">
    <property type="pathway name" value="Defensins"/>
</dbReference>
<dbReference type="SignaLink" id="P81534"/>
<dbReference type="BioGRID-ORCS" id="414325">
    <property type="hits" value="57 hits in 618 CRISPR screens"/>
</dbReference>
<dbReference type="BioGRID-ORCS" id="55894">
    <property type="hits" value="99 hits in 887 CRISPR screens"/>
</dbReference>
<dbReference type="ChiTaRS" id="DEFB103A">
    <property type="organism name" value="human"/>
</dbReference>
<dbReference type="ChiTaRS" id="DEFB103B">
    <property type="organism name" value="human"/>
</dbReference>
<dbReference type="EvolutionaryTrace" id="P81534"/>
<dbReference type="GeneWiki" id="DEFB103A"/>
<dbReference type="Pharos" id="P81534">
    <property type="development level" value="Tbio"/>
</dbReference>
<dbReference type="PRO" id="PR:P81534"/>
<dbReference type="Proteomes" id="UP000005640">
    <property type="component" value="Chromosome 8"/>
</dbReference>
<dbReference type="RNAct" id="P81534">
    <property type="molecule type" value="protein"/>
</dbReference>
<dbReference type="Bgee" id="ENSG00000176797">
    <property type="expression patterns" value="Expressed in male germ line stem cell (sensu Vertebrata) in testis and 50 other cell types or tissues"/>
</dbReference>
<dbReference type="GO" id="GO:0005576">
    <property type="term" value="C:extracellular region"/>
    <property type="evidence" value="ECO:0000304"/>
    <property type="project" value="Reactome"/>
</dbReference>
<dbReference type="GO" id="GO:0005615">
    <property type="term" value="C:extracellular space"/>
    <property type="evidence" value="ECO:0000314"/>
    <property type="project" value="MGI"/>
</dbReference>
<dbReference type="GO" id="GO:0005796">
    <property type="term" value="C:Golgi lumen"/>
    <property type="evidence" value="ECO:0000304"/>
    <property type="project" value="Reactome"/>
</dbReference>
<dbReference type="GO" id="GO:0031731">
    <property type="term" value="F:CCR6 chemokine receptor binding"/>
    <property type="evidence" value="ECO:0000318"/>
    <property type="project" value="GO_Central"/>
</dbReference>
<dbReference type="GO" id="GO:0042056">
    <property type="term" value="F:chemoattractant activity"/>
    <property type="evidence" value="ECO:0000318"/>
    <property type="project" value="GO_Central"/>
</dbReference>
<dbReference type="GO" id="GO:0060326">
    <property type="term" value="P:cell chemotaxis"/>
    <property type="evidence" value="ECO:0000318"/>
    <property type="project" value="GO_Central"/>
</dbReference>
<dbReference type="GO" id="GO:0042742">
    <property type="term" value="P:defense response to bacterium"/>
    <property type="evidence" value="ECO:0000315"/>
    <property type="project" value="MGI"/>
</dbReference>
<dbReference type="GO" id="GO:0050829">
    <property type="term" value="P:defense response to Gram-negative bacterium"/>
    <property type="evidence" value="ECO:0000314"/>
    <property type="project" value="UniProtKB"/>
</dbReference>
<dbReference type="GO" id="GO:0050830">
    <property type="term" value="P:defense response to Gram-positive bacterium"/>
    <property type="evidence" value="ECO:0000314"/>
    <property type="project" value="UniProtKB"/>
</dbReference>
<dbReference type="GO" id="GO:0051873">
    <property type="term" value="P:killing by host of symbiont cells"/>
    <property type="evidence" value="ECO:0000314"/>
    <property type="project" value="CACAO"/>
</dbReference>
<dbReference type="GO" id="GO:0031640">
    <property type="term" value="P:killing of cells of another organism"/>
    <property type="evidence" value="ECO:0000314"/>
    <property type="project" value="UniProtKB"/>
</dbReference>
<dbReference type="FunFam" id="3.10.360.10:FF:000001">
    <property type="entry name" value="Beta-defensin 1"/>
    <property type="match status" value="1"/>
</dbReference>
<dbReference type="Gene3D" id="3.10.360.10">
    <property type="entry name" value="Antimicrobial Peptide, Beta-defensin 2, Chain A"/>
    <property type="match status" value="1"/>
</dbReference>
<dbReference type="InterPro" id="IPR001855">
    <property type="entry name" value="Defensin_beta-like"/>
</dbReference>
<dbReference type="PANTHER" id="PTHR20515">
    <property type="entry name" value="BETA-DEFENSIN"/>
    <property type="match status" value="1"/>
</dbReference>
<dbReference type="PANTHER" id="PTHR20515:SF0">
    <property type="entry name" value="BETA-DEFENSIN 103"/>
    <property type="match status" value="1"/>
</dbReference>
<dbReference type="Pfam" id="PF00711">
    <property type="entry name" value="Defensin_beta"/>
    <property type="match status" value="1"/>
</dbReference>
<dbReference type="SUPFAM" id="SSF57392">
    <property type="entry name" value="Defensin-like"/>
    <property type="match status" value="1"/>
</dbReference>
<protein>
    <recommendedName>
        <fullName>Beta-defensin 103</fullName>
    </recommendedName>
    <alternativeName>
        <fullName>Beta-defensin 3</fullName>
        <shortName>BD-3</shortName>
        <shortName>DEFB-3</shortName>
        <shortName>HBD3</shortName>
        <shortName>hBD-3</shortName>
    </alternativeName>
    <alternativeName>
        <fullName>Defensin, beta 103</fullName>
    </alternativeName>
    <alternativeName>
        <fullName>Defensin-like protein</fullName>
    </alternativeName>
</protein>
<reference key="1">
    <citation type="journal article" date="2001" name="J. Biol. Chem.">
        <title>Isolation and characterization of human beta-defensin-3, a novel human inducible peptide antibiotic.</title>
        <authorList>
            <person name="Harder J."/>
            <person name="Bartels J."/>
            <person name="Christophers E."/>
            <person name="Schroeder J.-M."/>
        </authorList>
    </citation>
    <scope>NUCLEOTIDE SEQUENCE [MRNA]</scope>
    <scope>PROTEIN SEQUENCE OF 23-67</scope>
    <scope>FUNCTION</scope>
    <scope>TISSUE SPECIFICITY</scope>
    <scope>INDUCTION</scope>
    <scope>MASS SPECTROMETRY</scope>
    <source>
        <tissue>Keratinocyte</tissue>
        <tissue>Lung epithelium</tissue>
        <tissue>Tracheal epithelium</tissue>
    </source>
</reference>
<reference key="2">
    <citation type="journal article" date="2001" name="Cell Tissue Res.">
        <title>Identification of a novel, multifunctional beta-defensin (human beta-defensin 3) with specific antimicrobial activity. Its interaction with plasma membranes of Xenopus oocytes and the induction of macrophage chemoattraction.</title>
        <authorList>
            <person name="Conejo-Garcia J.-R."/>
            <person name="Jaumann F."/>
            <person name="Schulz S."/>
            <person name="Krause A."/>
            <person name="Rodriguez-Jimenez F.-J."/>
            <person name="Forssmann U."/>
            <person name="Adermann K."/>
            <person name="Kluever E."/>
            <person name="Vogelmeier C."/>
            <person name="Becker D."/>
            <person name="Hedrich R."/>
            <person name="Forssmann W.-G."/>
            <person name="Bals R."/>
        </authorList>
    </citation>
    <scope>NUCLEOTIDE SEQUENCE [MRNA]</scope>
    <scope>CHARACTERIZATION</scope>
</reference>
<reference key="3">
    <citation type="journal article" date="2001" name="Gene">
        <title>Discovery of new human beta-defensins using a genomics-based approach.</title>
        <authorList>
            <person name="Jia H.P."/>
            <person name="Schutte B.C."/>
            <person name="Schudy A."/>
            <person name="Linzmeier R."/>
            <person name="Guthmiller J.M."/>
            <person name="Johnson G.K."/>
            <person name="Tack B.F."/>
            <person name="Mitros J.P."/>
            <person name="Rosenthal A."/>
            <person name="Ganz T."/>
            <person name="McCray P.B. Jr."/>
        </authorList>
    </citation>
    <scope>NUCLEOTIDE SEQUENCE [MRNA]</scope>
</reference>
<reference key="4">
    <citation type="submission" date="2000-02" db="EMBL/GenBank/DDBJ databases">
        <authorList>
            <person name="Imai Y."/>
        </authorList>
    </citation>
    <scope>NUCLEOTIDE SEQUENCE [MRNA]</scope>
</reference>
<reference key="5">
    <citation type="submission" date="2000-08" db="EMBL/GenBank/DDBJ databases">
        <title>EST and genomic database mining yield novel human and mouse beta-defensins.</title>
        <authorList>
            <person name="Adler D.A."/>
            <person name="Diamond G."/>
            <person name="Sheppard P."/>
            <person name="Holloway J."/>
            <person name="Presnell S."/>
            <person name="Jaspers S."/>
            <person name="Whitmore T."/>
            <person name="Fox B."/>
            <person name="Gosink J."/>
            <person name="Rixon M."/>
            <person name="Gao Z."/>
            <person name="Haldeman B."/>
            <person name="O'Hara P."/>
        </authorList>
    </citation>
    <scope>NUCLEOTIDE SEQUENCE [MRNA]</scope>
</reference>
<reference key="6">
    <citation type="submission" date="2002-05" db="EMBL/GenBank/DDBJ databases">
        <title>Cloning and expression of Chinese human beta defensin-3.</title>
        <authorList>
            <person name="Chen S."/>
            <person name="He F."/>
            <person name="Li R."/>
        </authorList>
    </citation>
    <scope>NUCLEOTIDE SEQUENCE [MRNA]</scope>
    <source>
        <tissue>Tonsil</tissue>
    </source>
</reference>
<reference evidence="4" key="7">
    <citation type="journal article" date="2002" name="J. Biol. Chem.">
        <title>The solution structures of the human beta-defensins lead to a better understanding of the potent bactericidal activity of HBD3 against Staphylococcus aureus.</title>
        <authorList>
            <person name="Schibli D.J."/>
            <person name="Hunter H.N."/>
            <person name="Aseyev V."/>
            <person name="Starner T.D."/>
            <person name="Wiencek J.M."/>
            <person name="McCray P.B. Jr."/>
            <person name="Tack B.F."/>
            <person name="Vogel H.J."/>
        </authorList>
    </citation>
    <scope>STRUCTURE BY NMR OF 23-67</scope>
    <scope>DISULFIDE BONDS</scope>
</reference>
<name>D103A_HUMAN</name>
<gene>
    <name type="primary">DEFB103A</name>
    <name type="synonym">BD3</name>
    <name type="synonym">DEFB103</name>
    <name type="synonym">DEFB3</name>
</gene>
<gene>
    <name type="primary">DEFB103B</name>
</gene>